<dbReference type="EMBL" id="HE856379">
    <property type="protein sequence ID" value="CCI55492.1"/>
    <property type="molecule type" value="mRNA"/>
</dbReference>
<dbReference type="GO" id="GO:0005576">
    <property type="term" value="C:extracellular region"/>
    <property type="evidence" value="ECO:0007669"/>
    <property type="project" value="UniProtKB-SubCell"/>
</dbReference>
<dbReference type="GO" id="GO:0008200">
    <property type="term" value="F:ion channel inhibitor activity"/>
    <property type="evidence" value="ECO:0007669"/>
    <property type="project" value="InterPro"/>
</dbReference>
<dbReference type="GO" id="GO:0090729">
    <property type="term" value="F:toxin activity"/>
    <property type="evidence" value="ECO:0007669"/>
    <property type="project" value="UniProtKB-KW"/>
</dbReference>
<dbReference type="InterPro" id="IPR004214">
    <property type="entry name" value="Conotoxin"/>
</dbReference>
<dbReference type="Pfam" id="PF02950">
    <property type="entry name" value="Conotoxin"/>
    <property type="match status" value="1"/>
</dbReference>
<protein>
    <recommendedName>
        <fullName evidence="4">Conotoxin CnIIIF</fullName>
    </recommendedName>
</protein>
<reference key="1">
    <citation type="journal article" date="2012" name="J. Proteomics">
        <title>Large-scale discovery of conopeptides and conoproteins in the injectable venom of a fish-hunting cone snail using a combined proteomic and transcriptomic approach.</title>
        <authorList>
            <person name="Violette A."/>
            <person name="Biass D."/>
            <person name="Dutertre S."/>
            <person name="Koua D."/>
            <person name="Piquemal D."/>
            <person name="Pierrat F."/>
            <person name="Stocklin R."/>
            <person name="Favreau P."/>
        </authorList>
    </citation>
    <scope>NUCLEOTIDE SEQUENCE [MRNA]</scope>
    <scope>FUNCTION</scope>
    <scope>MASS SPECTROMETRY</scope>
    <scope>IDENTIFICATION BY MASS SPECTROMETRY</scope>
    <scope>SUBCELLULAR LOCATION</scope>
    <source>
        <tissue>Venom</tissue>
        <tissue>Venom duct</tissue>
    </source>
</reference>
<evidence type="ECO:0000250" key="1">
    <source>
        <dbReference type="UniProtKB" id="Q5EHP3"/>
    </source>
</evidence>
<evidence type="ECO:0000255" key="2"/>
<evidence type="ECO:0000269" key="3">
    <source>
    </source>
</evidence>
<evidence type="ECO:0000303" key="4">
    <source>
    </source>
</evidence>
<evidence type="ECO:0000305" key="5"/>
<evidence type="ECO:0000305" key="6">
    <source>
    </source>
</evidence>
<sequence length="73" mass="8123">MSKLGVLLTICLLLFPLTALPMDGDQSVDRPAERMQDDISSGQHPLFNQKRRCCGEGASCPRYFRNSQICSCC</sequence>
<comment type="function">
    <text evidence="3">Shows a paralytic effect in fish.</text>
</comment>
<comment type="subcellular location">
    <subcellularLocation>
        <location evidence="3">Secreted</location>
    </subcellularLocation>
</comment>
<comment type="tissue specificity">
    <text evidence="6">Expressed by the venom duct.</text>
</comment>
<comment type="domain">
    <text evidence="5">The cysteine framework is III (CC-C-C-CC). Classified in the M-1 branch, since 1 residue stands between the fourth and the fifth cysteine residues.</text>
</comment>
<comment type="mass spectrometry" mass="2435.9" method="Electrospray" evidence="3"/>
<comment type="miscellaneous">
    <text evidence="6">Found in injectable (milked) (IV) venom.</text>
</comment>
<comment type="similarity">
    <text evidence="5">Belongs to the conotoxin M superfamily.</text>
</comment>
<keyword id="KW-0165">Cleavage on pair of basic residues</keyword>
<keyword id="KW-1015">Disulfide bond</keyword>
<keyword id="KW-0528">Neurotoxin</keyword>
<keyword id="KW-0964">Secreted</keyword>
<keyword id="KW-0732">Signal</keyword>
<keyword id="KW-0800">Toxin</keyword>
<feature type="signal peptide" evidence="2">
    <location>
        <begin position="1"/>
        <end position="19"/>
    </location>
</feature>
<feature type="propeptide" id="PRO_0000450815" evidence="6">
    <location>
        <begin position="20"/>
        <end position="51"/>
    </location>
</feature>
<feature type="peptide" id="PRO_0000419880" description="Conotoxin CnIIIF" evidence="3">
    <location>
        <begin position="52"/>
        <end position="73"/>
    </location>
</feature>
<feature type="disulfide bond" evidence="1">
    <location>
        <begin position="53"/>
        <end position="72"/>
    </location>
</feature>
<feature type="disulfide bond" evidence="1">
    <location>
        <begin position="54"/>
        <end position="70"/>
    </location>
</feature>
<feature type="disulfide bond" evidence="1">
    <location>
        <begin position="60"/>
        <end position="73"/>
    </location>
</feature>
<organism>
    <name type="scientific">Conus consors</name>
    <name type="common">Singed cone</name>
    <dbReference type="NCBI Taxonomy" id="101297"/>
    <lineage>
        <taxon>Eukaryota</taxon>
        <taxon>Metazoa</taxon>
        <taxon>Spiralia</taxon>
        <taxon>Lophotrochozoa</taxon>
        <taxon>Mollusca</taxon>
        <taxon>Gastropoda</taxon>
        <taxon>Caenogastropoda</taxon>
        <taxon>Neogastropoda</taxon>
        <taxon>Conoidea</taxon>
        <taxon>Conidae</taxon>
        <taxon>Conus</taxon>
        <taxon>Pionoconus</taxon>
    </lineage>
</organism>
<proteinExistence type="evidence at protein level"/>
<accession>P0DKQ1</accession>
<accession>S6CQ13</accession>
<name>CM3F_CONCN</name>